<reference key="1">
    <citation type="journal article" date="2004" name="Science">
        <title>The 1.2-megabase genome sequence of Mimivirus.</title>
        <authorList>
            <person name="Raoult D."/>
            <person name="Audic S."/>
            <person name="Robert C."/>
            <person name="Abergel C."/>
            <person name="Renesto P."/>
            <person name="Ogata H."/>
            <person name="La Scola B."/>
            <person name="Susan M."/>
            <person name="Claverie J.-M."/>
        </authorList>
    </citation>
    <scope>NUCLEOTIDE SEQUENCE [LARGE SCALE GENOMIC DNA]</scope>
    <source>
        <strain>Rowbotham-Bradford</strain>
    </source>
</reference>
<sequence>MNGHFKIIIRDNFINNDENNYRDLHDLATNLYKLLCSKHCKISLSNLCIVKYYFDVPHINFYVSLTDGLIIYNDETYIRISHLYPEFCAMDNIIINNTNITNNTNIKMVKNKTQNPLEHFPKNQQSMNSTTNFIMSHANTLKEKTNIEPENRQKNISKNKIPKQFQNHIQKNNTFENKLEIISETLNPLNPLKSLQNSIQKQIPKQTQEQTQKQTQEQTQESSQNPHNEENYSLKIRQFRGDKLTFKYMKKDIDSGVLKPENINPMFSLKYMIFKILDSRLAIDFNSDQNIQQEYVLFNELFKECVDNNEDNKNNMDNEEDSDESDIESDSDLDDSKSQNIEIPYKYFYLPVEEKESIAKKYGLNVSEFEDKYINKSNNKIQSINQENSNTIFSESVKSDSNESKSIKPESIKSESIKSDNSNNHKNFGNTDFENNLLSLENYHTF</sequence>
<organism>
    <name type="scientific">Acanthamoeba polyphaga mimivirus</name>
    <name type="common">APMV</name>
    <dbReference type="NCBI Taxonomy" id="212035"/>
    <lineage>
        <taxon>Viruses</taxon>
        <taxon>Varidnaviria</taxon>
        <taxon>Bamfordvirae</taxon>
        <taxon>Nucleocytoviricota</taxon>
        <taxon>Megaviricetes</taxon>
        <taxon>Imitervirales</taxon>
        <taxon>Mimiviridae</taxon>
        <taxon>Megamimivirinae</taxon>
        <taxon>Mimivirus</taxon>
        <taxon>Mimivirus bradfordmassiliense</taxon>
    </lineage>
</organism>
<feature type="chain" id="PRO_0000247243" description="Uncharacterized protein L204">
    <location>
        <begin position="1"/>
        <end position="446"/>
    </location>
</feature>
<feature type="region of interest" description="Disordered" evidence="1">
    <location>
        <begin position="198"/>
        <end position="233"/>
    </location>
</feature>
<feature type="region of interest" description="Disordered" evidence="1">
    <location>
        <begin position="309"/>
        <end position="337"/>
    </location>
</feature>
<feature type="region of interest" description="Disordered" evidence="1">
    <location>
        <begin position="394"/>
        <end position="431"/>
    </location>
</feature>
<feature type="compositionally biased region" description="Low complexity" evidence="1">
    <location>
        <begin position="199"/>
        <end position="224"/>
    </location>
</feature>
<feature type="compositionally biased region" description="Acidic residues" evidence="1">
    <location>
        <begin position="317"/>
        <end position="333"/>
    </location>
</feature>
<feature type="compositionally biased region" description="Basic and acidic residues" evidence="1">
    <location>
        <begin position="397"/>
        <end position="418"/>
    </location>
</feature>
<gene>
    <name type="ordered locus">MIMI_L204</name>
</gene>
<evidence type="ECO:0000256" key="1">
    <source>
        <dbReference type="SAM" id="MobiDB-lite"/>
    </source>
</evidence>
<accession>Q5UQ25</accession>
<protein>
    <recommendedName>
        <fullName>Uncharacterized protein L204</fullName>
    </recommendedName>
</protein>
<name>YL204_MIMIV</name>
<organismHost>
    <name type="scientific">Acanthamoeba polyphaga</name>
    <name type="common">Amoeba</name>
    <dbReference type="NCBI Taxonomy" id="5757"/>
</organismHost>
<keyword id="KW-1185">Reference proteome</keyword>
<dbReference type="EMBL" id="AY653733">
    <property type="protein sequence ID" value="AAV50477.1"/>
    <property type="molecule type" value="Genomic_DNA"/>
</dbReference>
<dbReference type="SMR" id="Q5UQ25"/>
<dbReference type="KEGG" id="vg:9924811"/>
<dbReference type="Proteomes" id="UP000001134">
    <property type="component" value="Genome"/>
</dbReference>
<proteinExistence type="predicted"/>